<gene>
    <name evidence="1" type="primary">hemC</name>
    <name type="ordered locus">XAC0622</name>
</gene>
<accession>Q8PPR3</accession>
<evidence type="ECO:0000255" key="1">
    <source>
        <dbReference type="HAMAP-Rule" id="MF_00260"/>
    </source>
</evidence>
<protein>
    <recommendedName>
        <fullName evidence="1">Porphobilinogen deaminase</fullName>
        <shortName evidence="1">PBG</shortName>
        <ecNumber evidence="1">2.5.1.61</ecNumber>
    </recommendedName>
    <alternativeName>
        <fullName evidence="1">Hydroxymethylbilane synthase</fullName>
        <shortName evidence="1">HMBS</shortName>
    </alternativeName>
    <alternativeName>
        <fullName evidence="1">Pre-uroporphyrinogen synthase</fullName>
    </alternativeName>
</protein>
<keyword id="KW-0627">Porphyrin biosynthesis</keyword>
<keyword id="KW-0808">Transferase</keyword>
<sequence>MTTLRIATRKSPLALWQSEHVADALRQHHPGLEVVLVPMSTRGDEVLDRSLAAIGGKGLFLKELELAMLRGEADCAVHSLKDVPMELDEPFVLPAILERGDPADALVSNLYASLQALPLGARVGTSSLRRQAQLRAARPDLELIDLRGNVNTRLAKLDNGGYDAIVLACAGLQRLGLEARISARLDAPEWLPAPAQGAVAVECRGDDARIHSLLAVLDAGRTRVCVEAERAMNRALHGSCHVPVAAFARWEGQDLFLQGMVGSASDGRLIHADAHGSADDTEALGRRVAQGLFDKGAAQLLAEL</sequence>
<name>HEM3_XANAC</name>
<reference key="1">
    <citation type="journal article" date="2002" name="Nature">
        <title>Comparison of the genomes of two Xanthomonas pathogens with differing host specificities.</title>
        <authorList>
            <person name="da Silva A.C.R."/>
            <person name="Ferro J.A."/>
            <person name="Reinach F.C."/>
            <person name="Farah C.S."/>
            <person name="Furlan L.R."/>
            <person name="Quaggio R.B."/>
            <person name="Monteiro-Vitorello C.B."/>
            <person name="Van Sluys M.A."/>
            <person name="Almeida N.F. Jr."/>
            <person name="Alves L.M.C."/>
            <person name="do Amaral A.M."/>
            <person name="Bertolini M.C."/>
            <person name="Camargo L.E.A."/>
            <person name="Camarotte G."/>
            <person name="Cannavan F."/>
            <person name="Cardozo J."/>
            <person name="Chambergo F."/>
            <person name="Ciapina L.P."/>
            <person name="Cicarelli R.M.B."/>
            <person name="Coutinho L.L."/>
            <person name="Cursino-Santos J.R."/>
            <person name="El-Dorry H."/>
            <person name="Faria J.B."/>
            <person name="Ferreira A.J.S."/>
            <person name="Ferreira R.C.C."/>
            <person name="Ferro M.I.T."/>
            <person name="Formighieri E.F."/>
            <person name="Franco M.C."/>
            <person name="Greggio C.C."/>
            <person name="Gruber A."/>
            <person name="Katsuyama A.M."/>
            <person name="Kishi L.T."/>
            <person name="Leite R.P."/>
            <person name="Lemos E.G.M."/>
            <person name="Lemos M.V.F."/>
            <person name="Locali E.C."/>
            <person name="Machado M.A."/>
            <person name="Madeira A.M.B.N."/>
            <person name="Martinez-Rossi N.M."/>
            <person name="Martins E.C."/>
            <person name="Meidanis J."/>
            <person name="Menck C.F.M."/>
            <person name="Miyaki C.Y."/>
            <person name="Moon D.H."/>
            <person name="Moreira L.M."/>
            <person name="Novo M.T.M."/>
            <person name="Okura V.K."/>
            <person name="Oliveira M.C."/>
            <person name="Oliveira V.R."/>
            <person name="Pereira H.A."/>
            <person name="Rossi A."/>
            <person name="Sena J.A.D."/>
            <person name="Silva C."/>
            <person name="de Souza R.F."/>
            <person name="Spinola L.A.F."/>
            <person name="Takita M.A."/>
            <person name="Tamura R.E."/>
            <person name="Teixeira E.C."/>
            <person name="Tezza R.I.D."/>
            <person name="Trindade dos Santos M."/>
            <person name="Truffi D."/>
            <person name="Tsai S.M."/>
            <person name="White F.F."/>
            <person name="Setubal J.C."/>
            <person name="Kitajima J.P."/>
        </authorList>
    </citation>
    <scope>NUCLEOTIDE SEQUENCE [LARGE SCALE GENOMIC DNA]</scope>
    <source>
        <strain>306</strain>
    </source>
</reference>
<proteinExistence type="inferred from homology"/>
<feature type="chain" id="PRO_0000143010" description="Porphobilinogen deaminase">
    <location>
        <begin position="1"/>
        <end position="304"/>
    </location>
</feature>
<feature type="modified residue" description="S-(dipyrrolylmethanemethyl)cysteine" evidence="1">
    <location>
        <position position="240"/>
    </location>
</feature>
<dbReference type="EC" id="2.5.1.61" evidence="1"/>
<dbReference type="EMBL" id="AE008923">
    <property type="protein sequence ID" value="AAM35511.1"/>
    <property type="molecule type" value="Genomic_DNA"/>
</dbReference>
<dbReference type="RefSeq" id="WP_011050438.1">
    <property type="nucleotide sequence ID" value="NC_003919.1"/>
</dbReference>
<dbReference type="SMR" id="Q8PPR3"/>
<dbReference type="GeneID" id="66909821"/>
<dbReference type="KEGG" id="xac:XAC0622"/>
<dbReference type="eggNOG" id="COG0181">
    <property type="taxonomic scope" value="Bacteria"/>
</dbReference>
<dbReference type="HOGENOM" id="CLU_019704_0_2_6"/>
<dbReference type="UniPathway" id="UPA00251">
    <property type="reaction ID" value="UER00319"/>
</dbReference>
<dbReference type="Proteomes" id="UP000000576">
    <property type="component" value="Chromosome"/>
</dbReference>
<dbReference type="GO" id="GO:0005737">
    <property type="term" value="C:cytoplasm"/>
    <property type="evidence" value="ECO:0007669"/>
    <property type="project" value="TreeGrafter"/>
</dbReference>
<dbReference type="GO" id="GO:0004418">
    <property type="term" value="F:hydroxymethylbilane synthase activity"/>
    <property type="evidence" value="ECO:0007669"/>
    <property type="project" value="UniProtKB-UniRule"/>
</dbReference>
<dbReference type="GO" id="GO:0006782">
    <property type="term" value="P:protoporphyrinogen IX biosynthetic process"/>
    <property type="evidence" value="ECO:0007669"/>
    <property type="project" value="UniProtKB-UniRule"/>
</dbReference>
<dbReference type="CDD" id="cd13646">
    <property type="entry name" value="PBP2_EcHMBS_like"/>
    <property type="match status" value="1"/>
</dbReference>
<dbReference type="FunFam" id="3.40.190.10:FF:000004">
    <property type="entry name" value="Porphobilinogen deaminase"/>
    <property type="match status" value="1"/>
</dbReference>
<dbReference type="FunFam" id="3.40.190.10:FF:000005">
    <property type="entry name" value="Porphobilinogen deaminase"/>
    <property type="match status" value="1"/>
</dbReference>
<dbReference type="Gene3D" id="3.40.190.10">
    <property type="entry name" value="Periplasmic binding protein-like II"/>
    <property type="match status" value="2"/>
</dbReference>
<dbReference type="Gene3D" id="3.30.160.40">
    <property type="entry name" value="Porphobilinogen deaminase, C-terminal domain"/>
    <property type="match status" value="1"/>
</dbReference>
<dbReference type="HAMAP" id="MF_00260">
    <property type="entry name" value="Porphobil_deam"/>
    <property type="match status" value="1"/>
</dbReference>
<dbReference type="InterPro" id="IPR000860">
    <property type="entry name" value="HemC"/>
</dbReference>
<dbReference type="InterPro" id="IPR022419">
    <property type="entry name" value="Porphobilin_deaminase_cofac_BS"/>
</dbReference>
<dbReference type="InterPro" id="IPR022417">
    <property type="entry name" value="Porphobilin_deaminase_N"/>
</dbReference>
<dbReference type="InterPro" id="IPR022418">
    <property type="entry name" value="Porphobilinogen_deaminase_C"/>
</dbReference>
<dbReference type="InterPro" id="IPR036803">
    <property type="entry name" value="Porphobilinogen_deaminase_C_sf"/>
</dbReference>
<dbReference type="NCBIfam" id="TIGR00212">
    <property type="entry name" value="hemC"/>
    <property type="match status" value="1"/>
</dbReference>
<dbReference type="PANTHER" id="PTHR11557">
    <property type="entry name" value="PORPHOBILINOGEN DEAMINASE"/>
    <property type="match status" value="1"/>
</dbReference>
<dbReference type="PANTHER" id="PTHR11557:SF0">
    <property type="entry name" value="PORPHOBILINOGEN DEAMINASE"/>
    <property type="match status" value="1"/>
</dbReference>
<dbReference type="Pfam" id="PF01379">
    <property type="entry name" value="Porphobil_deam"/>
    <property type="match status" value="1"/>
</dbReference>
<dbReference type="Pfam" id="PF03900">
    <property type="entry name" value="Porphobil_deamC"/>
    <property type="match status" value="1"/>
</dbReference>
<dbReference type="PIRSF" id="PIRSF001438">
    <property type="entry name" value="4pyrrol_synth_OHMeBilane_synth"/>
    <property type="match status" value="1"/>
</dbReference>
<dbReference type="PRINTS" id="PR00151">
    <property type="entry name" value="PORPHBDMNASE"/>
</dbReference>
<dbReference type="SUPFAM" id="SSF53850">
    <property type="entry name" value="Periplasmic binding protein-like II"/>
    <property type="match status" value="1"/>
</dbReference>
<dbReference type="SUPFAM" id="SSF54782">
    <property type="entry name" value="Porphobilinogen deaminase (hydroxymethylbilane synthase), C-terminal domain"/>
    <property type="match status" value="1"/>
</dbReference>
<dbReference type="PROSITE" id="PS00533">
    <property type="entry name" value="PORPHOBILINOGEN_DEAM"/>
    <property type="match status" value="1"/>
</dbReference>
<organism>
    <name type="scientific">Xanthomonas axonopodis pv. citri (strain 306)</name>
    <dbReference type="NCBI Taxonomy" id="190486"/>
    <lineage>
        <taxon>Bacteria</taxon>
        <taxon>Pseudomonadati</taxon>
        <taxon>Pseudomonadota</taxon>
        <taxon>Gammaproteobacteria</taxon>
        <taxon>Lysobacterales</taxon>
        <taxon>Lysobacteraceae</taxon>
        <taxon>Xanthomonas</taxon>
    </lineage>
</organism>
<comment type="function">
    <text evidence="1">Tetrapolymerization of the monopyrrole PBG into the hydroxymethylbilane pre-uroporphyrinogen in several discrete steps.</text>
</comment>
<comment type="catalytic activity">
    <reaction evidence="1">
        <text>4 porphobilinogen + H2O = hydroxymethylbilane + 4 NH4(+)</text>
        <dbReference type="Rhea" id="RHEA:13185"/>
        <dbReference type="ChEBI" id="CHEBI:15377"/>
        <dbReference type="ChEBI" id="CHEBI:28938"/>
        <dbReference type="ChEBI" id="CHEBI:57845"/>
        <dbReference type="ChEBI" id="CHEBI:58126"/>
        <dbReference type="EC" id="2.5.1.61"/>
    </reaction>
</comment>
<comment type="cofactor">
    <cofactor evidence="1">
        <name>dipyrromethane</name>
        <dbReference type="ChEBI" id="CHEBI:60342"/>
    </cofactor>
    <text evidence="1">Binds 1 dipyrromethane group covalently.</text>
</comment>
<comment type="pathway">
    <text evidence="1">Porphyrin-containing compound metabolism; protoporphyrin-IX biosynthesis; coproporphyrinogen-III from 5-aminolevulinate: step 2/4.</text>
</comment>
<comment type="subunit">
    <text evidence="1">Monomer.</text>
</comment>
<comment type="miscellaneous">
    <text evidence="1">The porphobilinogen subunits are added to the dipyrromethane group.</text>
</comment>
<comment type="similarity">
    <text evidence="1">Belongs to the HMBS family.</text>
</comment>